<gene>
    <name type="primary">eglA</name>
    <name type="ORF">AN1285</name>
</gene>
<dbReference type="EC" id="3.2.1.4"/>
<dbReference type="EMBL" id="AB009402">
    <property type="protein sequence ID" value="BAA82592.1"/>
    <property type="molecule type" value="Genomic_DNA"/>
</dbReference>
<dbReference type="EMBL" id="DQ490472">
    <property type="protein sequence ID" value="ABF50848.1"/>
    <property type="molecule type" value="mRNA"/>
</dbReference>
<dbReference type="EMBL" id="AACD01000017">
    <property type="protein sequence ID" value="EAA65878.1"/>
    <property type="molecule type" value="Genomic_DNA"/>
</dbReference>
<dbReference type="EMBL" id="BN001308">
    <property type="protein sequence ID" value="CBF87793.1"/>
    <property type="molecule type" value="Genomic_DNA"/>
</dbReference>
<dbReference type="RefSeq" id="XP_658889.1">
    <property type="nucleotide sequence ID" value="XM_653797.1"/>
</dbReference>
<dbReference type="SMR" id="Q5BDU5"/>
<dbReference type="STRING" id="227321.Q5BDU5"/>
<dbReference type="CAZy" id="GH5">
    <property type="family name" value="Glycoside Hydrolase Family 5"/>
</dbReference>
<dbReference type="EnsemblFungi" id="CBF87793">
    <property type="protein sequence ID" value="CBF87793"/>
    <property type="gene ID" value="ANIA_01285"/>
</dbReference>
<dbReference type="KEGG" id="ani:ANIA_01285"/>
<dbReference type="VEuPathDB" id="FungiDB:AN1285"/>
<dbReference type="eggNOG" id="ENOG502QXN4">
    <property type="taxonomic scope" value="Eukaryota"/>
</dbReference>
<dbReference type="HOGENOM" id="CLU_029718_0_1_1"/>
<dbReference type="InParanoid" id="Q5BDU5"/>
<dbReference type="OMA" id="FRMERLI"/>
<dbReference type="OrthoDB" id="5823761at2759"/>
<dbReference type="Proteomes" id="UP000000560">
    <property type="component" value="Chromosome VIII"/>
</dbReference>
<dbReference type="GO" id="GO:0005576">
    <property type="term" value="C:extracellular region"/>
    <property type="evidence" value="ECO:0007669"/>
    <property type="project" value="UniProtKB-SubCell"/>
</dbReference>
<dbReference type="GO" id="GO:0008810">
    <property type="term" value="F:cellulase activity"/>
    <property type="evidence" value="ECO:0000314"/>
    <property type="project" value="UniProtKB"/>
</dbReference>
<dbReference type="GO" id="GO:0030245">
    <property type="term" value="P:cellulose catabolic process"/>
    <property type="evidence" value="ECO:0007669"/>
    <property type="project" value="UniProtKB-KW"/>
</dbReference>
<dbReference type="GO" id="GO:0009251">
    <property type="term" value="P:glucan catabolic process"/>
    <property type="evidence" value="ECO:0000314"/>
    <property type="project" value="UniProtKB"/>
</dbReference>
<dbReference type="FunFam" id="3.20.20.80:FF:000078">
    <property type="entry name" value="Endo-beta-1,4-glucanase B"/>
    <property type="match status" value="1"/>
</dbReference>
<dbReference type="Gene3D" id="3.20.20.80">
    <property type="entry name" value="Glycosidases"/>
    <property type="match status" value="1"/>
</dbReference>
<dbReference type="InterPro" id="IPR001547">
    <property type="entry name" value="Glyco_hydro_5"/>
</dbReference>
<dbReference type="InterPro" id="IPR017853">
    <property type="entry name" value="Glycoside_hydrolase_SF"/>
</dbReference>
<dbReference type="PANTHER" id="PTHR34142">
    <property type="entry name" value="ENDO-BETA-1,4-GLUCANASE A"/>
    <property type="match status" value="1"/>
</dbReference>
<dbReference type="PANTHER" id="PTHR34142:SF1">
    <property type="entry name" value="GLYCOSIDE HYDROLASE FAMILY 5 DOMAIN-CONTAINING PROTEIN"/>
    <property type="match status" value="1"/>
</dbReference>
<dbReference type="Pfam" id="PF00150">
    <property type="entry name" value="Cellulase"/>
    <property type="match status" value="1"/>
</dbReference>
<dbReference type="SUPFAM" id="SSF51445">
    <property type="entry name" value="(Trans)glycosidases"/>
    <property type="match status" value="1"/>
</dbReference>
<proteinExistence type="evidence at protein level"/>
<keyword id="KW-0119">Carbohydrate metabolism</keyword>
<keyword id="KW-0136">Cellulose degradation</keyword>
<keyword id="KW-0326">Glycosidase</keyword>
<keyword id="KW-0378">Hydrolase</keyword>
<keyword id="KW-0624">Polysaccharide degradation</keyword>
<keyword id="KW-1185">Reference proteome</keyword>
<keyword id="KW-0964">Secreted</keyword>
<keyword id="KW-0732">Signal</keyword>
<evidence type="ECO:0000250" key="1"/>
<evidence type="ECO:0000255" key="2"/>
<evidence type="ECO:0000269" key="3">
    <source>
    </source>
</evidence>
<evidence type="ECO:0000269" key="4">
    <source>
    </source>
</evidence>
<evidence type="ECO:0000305" key="5"/>
<reference key="1">
    <citation type="journal article" date="1999" name="FEMS Microbiol. Lett.">
        <title>Structure and expression properties of the endo-beta-1,4-glucanase A gene from the filamentous fungus Aspergillus nidulans.</title>
        <authorList>
            <person name="Chikamatsu G."/>
            <person name="Shirai K."/>
            <person name="Kato M."/>
            <person name="Kobayashi T."/>
            <person name="Tsukagoshi N."/>
        </authorList>
    </citation>
    <scope>NUCLEOTIDE SEQUENCE [GENOMIC DNA]</scope>
    <scope>FUNCTION</scope>
    <scope>INDUCTION</scope>
</reference>
<reference key="2">
    <citation type="journal article" date="2006" name="Proc. Natl. Acad. Sci. U.S.A.">
        <title>Development and application of a suite of polysaccharide-degrading enzymes for analyzing plant cell walls.</title>
        <authorList>
            <person name="Bauer S."/>
            <person name="Vasu P."/>
            <person name="Persson S."/>
            <person name="Mort A.J."/>
            <person name="Somerville C.R."/>
        </authorList>
    </citation>
    <scope>NUCLEOTIDE SEQUENCE [MRNA]</scope>
    <scope>FUNCTION</scope>
    <scope>BIOPHYSICOCHEMICAL PROPERTIES</scope>
    <source>
        <strain>FGSC A4 / ATCC 38163 / CBS 112.46 / NRRL 194 / M139</strain>
    </source>
</reference>
<reference key="3">
    <citation type="journal article" date="2005" name="Nature">
        <title>Sequencing of Aspergillus nidulans and comparative analysis with A. fumigatus and A. oryzae.</title>
        <authorList>
            <person name="Galagan J.E."/>
            <person name="Calvo S.E."/>
            <person name="Cuomo C."/>
            <person name="Ma L.-J."/>
            <person name="Wortman J.R."/>
            <person name="Batzoglou S."/>
            <person name="Lee S.-I."/>
            <person name="Bastuerkmen M."/>
            <person name="Spevak C.C."/>
            <person name="Clutterbuck J."/>
            <person name="Kapitonov V."/>
            <person name="Jurka J."/>
            <person name="Scazzocchio C."/>
            <person name="Farman M.L."/>
            <person name="Butler J."/>
            <person name="Purcell S."/>
            <person name="Harris S."/>
            <person name="Braus G.H."/>
            <person name="Draht O."/>
            <person name="Busch S."/>
            <person name="D'Enfert C."/>
            <person name="Bouchier C."/>
            <person name="Goldman G.H."/>
            <person name="Bell-Pedersen D."/>
            <person name="Griffiths-Jones S."/>
            <person name="Doonan J.H."/>
            <person name="Yu J."/>
            <person name="Vienken K."/>
            <person name="Pain A."/>
            <person name="Freitag M."/>
            <person name="Selker E.U."/>
            <person name="Archer D.B."/>
            <person name="Penalva M.A."/>
            <person name="Oakley B.R."/>
            <person name="Momany M."/>
            <person name="Tanaka T."/>
            <person name="Kumagai T."/>
            <person name="Asai K."/>
            <person name="Machida M."/>
            <person name="Nierman W.C."/>
            <person name="Denning D.W."/>
            <person name="Caddick M.X."/>
            <person name="Hynes M."/>
            <person name="Paoletti M."/>
            <person name="Fischer R."/>
            <person name="Miller B.L."/>
            <person name="Dyer P.S."/>
            <person name="Sachs M.S."/>
            <person name="Osmani S.A."/>
            <person name="Birren B.W."/>
        </authorList>
    </citation>
    <scope>NUCLEOTIDE SEQUENCE [LARGE SCALE GENOMIC DNA]</scope>
    <source>
        <strain>FGSC A4 / ATCC 38163 / CBS 112.46 / NRRL 194 / M139</strain>
    </source>
</reference>
<reference key="4">
    <citation type="journal article" date="2009" name="Fungal Genet. Biol.">
        <title>The 2008 update of the Aspergillus nidulans genome annotation: a community effort.</title>
        <authorList>
            <person name="Wortman J.R."/>
            <person name="Gilsenan J.M."/>
            <person name="Joardar V."/>
            <person name="Deegan J."/>
            <person name="Clutterbuck J."/>
            <person name="Andersen M.R."/>
            <person name="Archer D."/>
            <person name="Bencina M."/>
            <person name="Braus G."/>
            <person name="Coutinho P."/>
            <person name="von Dohren H."/>
            <person name="Doonan J."/>
            <person name="Driessen A.J."/>
            <person name="Durek P."/>
            <person name="Espeso E."/>
            <person name="Fekete E."/>
            <person name="Flipphi M."/>
            <person name="Estrada C.G."/>
            <person name="Geysens S."/>
            <person name="Goldman G."/>
            <person name="de Groot P.W."/>
            <person name="Hansen K."/>
            <person name="Harris S.D."/>
            <person name="Heinekamp T."/>
            <person name="Helmstaedt K."/>
            <person name="Henrissat B."/>
            <person name="Hofmann G."/>
            <person name="Homan T."/>
            <person name="Horio T."/>
            <person name="Horiuchi H."/>
            <person name="James S."/>
            <person name="Jones M."/>
            <person name="Karaffa L."/>
            <person name="Karanyi Z."/>
            <person name="Kato M."/>
            <person name="Keller N."/>
            <person name="Kelly D.E."/>
            <person name="Kiel J.A."/>
            <person name="Kim J.M."/>
            <person name="van der Klei I.J."/>
            <person name="Klis F.M."/>
            <person name="Kovalchuk A."/>
            <person name="Krasevec N."/>
            <person name="Kubicek C.P."/>
            <person name="Liu B."/>
            <person name="Maccabe A."/>
            <person name="Meyer V."/>
            <person name="Mirabito P."/>
            <person name="Miskei M."/>
            <person name="Mos M."/>
            <person name="Mullins J."/>
            <person name="Nelson D.R."/>
            <person name="Nielsen J."/>
            <person name="Oakley B.R."/>
            <person name="Osmani S.A."/>
            <person name="Pakula T."/>
            <person name="Paszewski A."/>
            <person name="Paulsen I."/>
            <person name="Pilsyk S."/>
            <person name="Pocsi I."/>
            <person name="Punt P.J."/>
            <person name="Ram A.F."/>
            <person name="Ren Q."/>
            <person name="Robellet X."/>
            <person name="Robson G."/>
            <person name="Seiboth B."/>
            <person name="van Solingen P."/>
            <person name="Specht T."/>
            <person name="Sun J."/>
            <person name="Taheri-Talesh N."/>
            <person name="Takeshita N."/>
            <person name="Ussery D."/>
            <person name="vanKuyk P.A."/>
            <person name="Visser H."/>
            <person name="van de Vondervoort P.J."/>
            <person name="de Vries R.P."/>
            <person name="Walton J."/>
            <person name="Xiang X."/>
            <person name="Xiong Y."/>
            <person name="Zeng A.P."/>
            <person name="Brandt B.W."/>
            <person name="Cornell M.J."/>
            <person name="van den Hondel C.A."/>
            <person name="Visser J."/>
            <person name="Oliver S.G."/>
            <person name="Turner G."/>
        </authorList>
    </citation>
    <scope>GENOME REANNOTATION</scope>
    <source>
        <strain>FGSC A4 / ATCC 38163 / CBS 112.46 / NRRL 194 / M139</strain>
    </source>
</reference>
<sequence length="326" mass="35812">MRSLVLLSSVLALVAPSKGAFTWLGTNEAGAEFGEGSYPGELGTEYIWPDLGTIGTLRNEGMNIFRVAFSMERLVPDSLAGPVADEYFQDLVETVNGITALGAYAVLDPHNYGRYYGNIITSTDDFAAFWTILATEFASNELVIFDTNNEYHTMDQSLVLNLNQAAIDAIRASGATSQYIFAEGNSWTGAWTWVDVNDNMKALTDPQDKLIYEMHQYLDSDGSGTNTACVSSTIGSERVTAATNWLRENGKLGVLGEFAGANNQVCKDAVADLLEYLEENSDVWLGALWWAAGPWWGDYMFNMEPTSGIAYQEYSEILQPYFVGSQ</sequence>
<organism>
    <name type="scientific">Emericella nidulans (strain FGSC A4 / ATCC 38163 / CBS 112.46 / NRRL 194 / M139)</name>
    <name type="common">Aspergillus nidulans</name>
    <dbReference type="NCBI Taxonomy" id="227321"/>
    <lineage>
        <taxon>Eukaryota</taxon>
        <taxon>Fungi</taxon>
        <taxon>Dikarya</taxon>
        <taxon>Ascomycota</taxon>
        <taxon>Pezizomycotina</taxon>
        <taxon>Eurotiomycetes</taxon>
        <taxon>Eurotiomycetidae</taxon>
        <taxon>Eurotiales</taxon>
        <taxon>Aspergillaceae</taxon>
        <taxon>Aspergillus</taxon>
        <taxon>Aspergillus subgen. Nidulantes</taxon>
    </lineage>
</organism>
<accession>Q5BDU5</accession>
<accession>C8VSF3</accession>
<accession>Q1HFV2</accession>
<accession>Q9Y8H6</accession>
<comment type="function">
    <text evidence="3 4">Has endoglucanase activity on substrates containing beta-1,4 glycosidic bonds, like in carboxymethylcellulose (CMC), hydroxyethylcellulose (HEC) and beta-glucan. Involved in the degradation of complex natural cellulosic substrates.</text>
</comment>
<comment type="catalytic activity">
    <reaction>
        <text>Endohydrolysis of (1-&gt;4)-beta-D-glucosidic linkages in cellulose, lichenin and cereal beta-D-glucans.</text>
        <dbReference type="EC" id="3.2.1.4"/>
    </reaction>
</comment>
<comment type="biophysicochemical properties">
    <phDependence>
        <text evidence="4">Optimum pH is 4.0.</text>
    </phDependence>
    <temperatureDependence>
        <text evidence="4">Optimum temperature is 57 degrees Celsius.</text>
    </temperatureDependence>
</comment>
<comment type="subcellular location">
    <subcellularLocation>
        <location evidence="1">Secreted</location>
    </subcellularLocation>
</comment>
<comment type="induction">
    <text evidence="3">Highly expressed in presence of carboxymethylcellulose (CMC).</text>
</comment>
<comment type="similarity">
    <text evidence="5">Belongs to the glycosyl hydrolase 5 (cellulase A) family.</text>
</comment>
<name>EGLA_EMENI</name>
<feature type="signal peptide" evidence="2">
    <location>
        <begin position="1"/>
        <end position="19"/>
    </location>
</feature>
<feature type="chain" id="PRO_5000049150" description="Endo-beta-1,4-glucanase A">
    <location>
        <begin position="20"/>
        <end position="326"/>
    </location>
</feature>
<feature type="active site" description="Proton donor" evidence="1">
    <location>
        <position position="150"/>
    </location>
</feature>
<feature type="active site" description="Nucleophile" evidence="1">
    <location>
        <position position="257"/>
    </location>
</feature>
<feature type="sequence conflict" description="In Ref. 1; BAA82592." evidence="5" ref="1">
    <location>
        <position position="116"/>
    </location>
</feature>
<protein>
    <recommendedName>
        <fullName>Endo-beta-1,4-glucanase A</fullName>
        <shortName>Endoglucanase A</shortName>
        <ecNumber>3.2.1.4</ecNumber>
    </recommendedName>
    <alternativeName>
        <fullName>Carboxymethylcellulase A</fullName>
    </alternativeName>
    <alternativeName>
        <fullName>Cellulase A</fullName>
    </alternativeName>
</protein>